<protein>
    <recommendedName>
        <fullName>Putative killer cell immunoglobulin-like receptor-like protein KIR3DX1</fullName>
    </recommendedName>
    <alternativeName>
        <fullName>Leukocyte receptor cluster member 12</fullName>
    </alternativeName>
</protein>
<comment type="subcellular location">
    <subcellularLocation>
        <location evidence="4">Secreted</location>
    </subcellularLocation>
</comment>
<comment type="tissue specificity">
    <text evidence="3">Expressed in NK-cells.</text>
</comment>
<comment type="caution">
    <text evidence="4">Could be the product of a pseudogene. According to PubMed:16911775, it could constitute the ancestral killer immunoglobulin-like receptor gene in primates.</text>
</comment>
<comment type="sequence caution" evidence="4">
    <conflict type="miscellaneous discrepancy">
        <sequence resource="EMBL-CDS" id="BAB15757"/>
    </conflict>
    <text>Unlikely isoform. Aberrant splice sites and probable target of nonsense-mediated mRNA decay.</text>
</comment>
<accession>Q9H7L2</accession>
<accession>B7WNL0</accession>
<accession>Q8N0S4</accession>
<reference key="1">
    <citation type="journal article" date="2004" name="Nature">
        <title>The DNA sequence and biology of human chromosome 19.</title>
        <authorList>
            <person name="Grimwood J."/>
            <person name="Gordon L.A."/>
            <person name="Olsen A.S."/>
            <person name="Terry A."/>
            <person name="Schmutz J."/>
            <person name="Lamerdin J.E."/>
            <person name="Hellsten U."/>
            <person name="Goodstein D."/>
            <person name="Couronne O."/>
            <person name="Tran-Gyamfi M."/>
            <person name="Aerts A."/>
            <person name="Altherr M."/>
            <person name="Ashworth L."/>
            <person name="Bajorek E."/>
            <person name="Black S."/>
            <person name="Branscomb E."/>
            <person name="Caenepeel S."/>
            <person name="Carrano A.V."/>
            <person name="Caoile C."/>
            <person name="Chan Y.M."/>
            <person name="Christensen M."/>
            <person name="Cleland C.A."/>
            <person name="Copeland A."/>
            <person name="Dalin E."/>
            <person name="Dehal P."/>
            <person name="Denys M."/>
            <person name="Detter J.C."/>
            <person name="Escobar J."/>
            <person name="Flowers D."/>
            <person name="Fotopulos D."/>
            <person name="Garcia C."/>
            <person name="Georgescu A.M."/>
            <person name="Glavina T."/>
            <person name="Gomez M."/>
            <person name="Gonzales E."/>
            <person name="Groza M."/>
            <person name="Hammon N."/>
            <person name="Hawkins T."/>
            <person name="Haydu L."/>
            <person name="Ho I."/>
            <person name="Huang W."/>
            <person name="Israni S."/>
            <person name="Jett J."/>
            <person name="Kadner K."/>
            <person name="Kimball H."/>
            <person name="Kobayashi A."/>
            <person name="Larionov V."/>
            <person name="Leem S.-H."/>
            <person name="Lopez F."/>
            <person name="Lou Y."/>
            <person name="Lowry S."/>
            <person name="Malfatti S."/>
            <person name="Martinez D."/>
            <person name="McCready P.M."/>
            <person name="Medina C."/>
            <person name="Morgan J."/>
            <person name="Nelson K."/>
            <person name="Nolan M."/>
            <person name="Ovcharenko I."/>
            <person name="Pitluck S."/>
            <person name="Pollard M."/>
            <person name="Popkie A.P."/>
            <person name="Predki P."/>
            <person name="Quan G."/>
            <person name="Ramirez L."/>
            <person name="Rash S."/>
            <person name="Retterer J."/>
            <person name="Rodriguez A."/>
            <person name="Rogers S."/>
            <person name="Salamov A."/>
            <person name="Salazar A."/>
            <person name="She X."/>
            <person name="Smith D."/>
            <person name="Slezak T."/>
            <person name="Solovyev V."/>
            <person name="Thayer N."/>
            <person name="Tice H."/>
            <person name="Tsai M."/>
            <person name="Ustaszewska A."/>
            <person name="Vo N."/>
            <person name="Wagner M."/>
            <person name="Wheeler J."/>
            <person name="Wu K."/>
            <person name="Xie G."/>
            <person name="Yang J."/>
            <person name="Dubchak I."/>
            <person name="Furey T.S."/>
            <person name="DeJong P."/>
            <person name="Dickson M."/>
            <person name="Gordon D."/>
            <person name="Eichler E.E."/>
            <person name="Pennacchio L.A."/>
            <person name="Richardson P."/>
            <person name="Stubbs L."/>
            <person name="Rokhsar D.S."/>
            <person name="Myers R.M."/>
            <person name="Rubin E.M."/>
            <person name="Lucas S.M."/>
        </authorList>
    </citation>
    <scope>NUCLEOTIDE SEQUENCE [LARGE SCALE GENOMIC DNA]</scope>
</reference>
<reference key="2">
    <citation type="submission" date="2005-07" db="EMBL/GenBank/DDBJ databases">
        <authorList>
            <person name="Mural R.J."/>
            <person name="Istrail S."/>
            <person name="Sutton G.G."/>
            <person name="Florea L."/>
            <person name="Halpern A.L."/>
            <person name="Mobarry C.M."/>
            <person name="Lippert R."/>
            <person name="Walenz B."/>
            <person name="Shatkay H."/>
            <person name="Dew I."/>
            <person name="Miller J.R."/>
            <person name="Flanigan M.J."/>
            <person name="Edwards N.J."/>
            <person name="Bolanos R."/>
            <person name="Fasulo D."/>
            <person name="Halldorsson B.V."/>
            <person name="Hannenhalli S."/>
            <person name="Turner R."/>
            <person name="Yooseph S."/>
            <person name="Lu F."/>
            <person name="Nusskern D.R."/>
            <person name="Shue B.C."/>
            <person name="Zheng X.H."/>
            <person name="Zhong F."/>
            <person name="Delcher A.L."/>
            <person name="Huson D.H."/>
            <person name="Kravitz S.A."/>
            <person name="Mouchard L."/>
            <person name="Reinert K."/>
            <person name="Remington K.A."/>
            <person name="Clark A.G."/>
            <person name="Waterman M.S."/>
            <person name="Eichler E.E."/>
            <person name="Adams M.D."/>
            <person name="Hunkapiller M.W."/>
            <person name="Myers E.W."/>
            <person name="Venter J.C."/>
        </authorList>
    </citation>
    <scope>NUCLEOTIDE SEQUENCE [LARGE SCALE GENOMIC DNA]</scope>
</reference>
<reference key="3">
    <citation type="journal article" date="2004" name="Nat. Genet.">
        <title>Complete sequencing and characterization of 21,243 full-length human cDNAs.</title>
        <authorList>
            <person name="Ota T."/>
            <person name="Suzuki Y."/>
            <person name="Nishikawa T."/>
            <person name="Otsuki T."/>
            <person name="Sugiyama T."/>
            <person name="Irie R."/>
            <person name="Wakamatsu A."/>
            <person name="Hayashi K."/>
            <person name="Sato H."/>
            <person name="Nagai K."/>
            <person name="Kimura K."/>
            <person name="Makita H."/>
            <person name="Sekine M."/>
            <person name="Obayashi M."/>
            <person name="Nishi T."/>
            <person name="Shibahara T."/>
            <person name="Tanaka T."/>
            <person name="Ishii S."/>
            <person name="Yamamoto J."/>
            <person name="Saito K."/>
            <person name="Kawai Y."/>
            <person name="Isono Y."/>
            <person name="Nakamura Y."/>
            <person name="Nagahari K."/>
            <person name="Murakami K."/>
            <person name="Yasuda T."/>
            <person name="Iwayanagi T."/>
            <person name="Wagatsuma M."/>
            <person name="Shiratori A."/>
            <person name="Sudo H."/>
            <person name="Hosoiri T."/>
            <person name="Kaku Y."/>
            <person name="Kodaira H."/>
            <person name="Kondo H."/>
            <person name="Sugawara M."/>
            <person name="Takahashi M."/>
            <person name="Kanda K."/>
            <person name="Yokoi T."/>
            <person name="Furuya T."/>
            <person name="Kikkawa E."/>
            <person name="Omura Y."/>
            <person name="Abe K."/>
            <person name="Kamihara K."/>
            <person name="Katsuta N."/>
            <person name="Sato K."/>
            <person name="Tanikawa M."/>
            <person name="Yamazaki M."/>
            <person name="Ninomiya K."/>
            <person name="Ishibashi T."/>
            <person name="Yamashita H."/>
            <person name="Murakawa K."/>
            <person name="Fujimori K."/>
            <person name="Tanai H."/>
            <person name="Kimata M."/>
            <person name="Watanabe M."/>
            <person name="Hiraoka S."/>
            <person name="Chiba Y."/>
            <person name="Ishida S."/>
            <person name="Ono Y."/>
            <person name="Takiguchi S."/>
            <person name="Watanabe S."/>
            <person name="Yosida M."/>
            <person name="Hotuta T."/>
            <person name="Kusano J."/>
            <person name="Kanehori K."/>
            <person name="Takahashi-Fujii A."/>
            <person name="Hara H."/>
            <person name="Tanase T.-O."/>
            <person name="Nomura Y."/>
            <person name="Togiya S."/>
            <person name="Komai F."/>
            <person name="Hara R."/>
            <person name="Takeuchi K."/>
            <person name="Arita M."/>
            <person name="Imose N."/>
            <person name="Musashino K."/>
            <person name="Yuuki H."/>
            <person name="Oshima A."/>
            <person name="Sasaki N."/>
            <person name="Aotsuka S."/>
            <person name="Yoshikawa Y."/>
            <person name="Matsunawa H."/>
            <person name="Ichihara T."/>
            <person name="Shiohata N."/>
            <person name="Sano S."/>
            <person name="Moriya S."/>
            <person name="Momiyama H."/>
            <person name="Satoh N."/>
            <person name="Takami S."/>
            <person name="Terashima Y."/>
            <person name="Suzuki O."/>
            <person name="Nakagawa S."/>
            <person name="Senoh A."/>
            <person name="Mizoguchi H."/>
            <person name="Goto Y."/>
            <person name="Shimizu F."/>
            <person name="Wakebe H."/>
            <person name="Hishigaki H."/>
            <person name="Watanabe T."/>
            <person name="Sugiyama A."/>
            <person name="Takemoto M."/>
            <person name="Kawakami B."/>
            <person name="Yamazaki M."/>
            <person name="Watanabe K."/>
            <person name="Kumagai A."/>
            <person name="Itakura S."/>
            <person name="Fukuzumi Y."/>
            <person name="Fujimori Y."/>
            <person name="Komiyama M."/>
            <person name="Tashiro H."/>
            <person name="Tanigami A."/>
            <person name="Fujiwara T."/>
            <person name="Ono T."/>
            <person name="Yamada K."/>
            <person name="Fujii Y."/>
            <person name="Ozaki K."/>
            <person name="Hirao M."/>
            <person name="Ohmori Y."/>
            <person name="Kawabata A."/>
            <person name="Hikiji T."/>
            <person name="Kobatake N."/>
            <person name="Inagaki H."/>
            <person name="Ikema Y."/>
            <person name="Okamoto S."/>
            <person name="Okitani R."/>
            <person name="Kawakami T."/>
            <person name="Noguchi S."/>
            <person name="Itoh T."/>
            <person name="Shigeta K."/>
            <person name="Senba T."/>
            <person name="Matsumura K."/>
            <person name="Nakajima Y."/>
            <person name="Mizuno T."/>
            <person name="Morinaga M."/>
            <person name="Sasaki M."/>
            <person name="Togashi T."/>
            <person name="Oyama M."/>
            <person name="Hata H."/>
            <person name="Watanabe M."/>
            <person name="Komatsu T."/>
            <person name="Mizushima-Sugano J."/>
            <person name="Satoh T."/>
            <person name="Shirai Y."/>
            <person name="Takahashi Y."/>
            <person name="Nakagawa K."/>
            <person name="Okumura K."/>
            <person name="Nagase T."/>
            <person name="Nomura N."/>
            <person name="Kikuchi H."/>
            <person name="Masuho Y."/>
            <person name="Yamashita R."/>
            <person name="Nakai K."/>
            <person name="Yada T."/>
            <person name="Nakamura Y."/>
            <person name="Ohara O."/>
            <person name="Isogai T."/>
            <person name="Sugano S."/>
        </authorList>
    </citation>
    <scope>NUCLEOTIDE SEQUENCE [LARGE SCALE MRNA] OF 117-333</scope>
    <source>
        <tissue>Spleen</tissue>
    </source>
</reference>
<reference key="4">
    <citation type="journal article" date="2006" name="BMC Genomics">
        <title>Identification of the ancestral killer immunoglobulin-like receptor gene in primates.</title>
        <authorList>
            <person name="Sambrook J.G."/>
            <person name="Bashirova A."/>
            <person name="Andersen H."/>
            <person name="Piatak M."/>
            <person name="Vernikos G.S."/>
            <person name="Coggill P."/>
            <person name="Lifson J.D."/>
            <person name="Carrington M."/>
            <person name="Beck S."/>
        </authorList>
    </citation>
    <scope>IDENTIFICATION</scope>
    <scope>TISSUE SPECIFICITY</scope>
</reference>
<gene>
    <name type="primary">KIR3DX1</name>
    <name type="synonym">KIR3DL0</name>
    <name type="synonym">LENG12</name>
</gene>
<feature type="signal peptide" evidence="1">
    <location>
        <begin position="1"/>
        <end position="16"/>
    </location>
</feature>
<feature type="chain" id="PRO_0000349175" description="Putative killer cell immunoglobulin-like receptor-like protein KIR3DX1">
    <location>
        <begin position="17"/>
        <end position="352"/>
    </location>
</feature>
<feature type="domain" description="Ig-like C2-type 1">
    <location>
        <begin position="17"/>
        <end position="112"/>
    </location>
</feature>
<feature type="domain" description="Ig-like C2-type 2">
    <location>
        <begin position="224"/>
        <end position="311"/>
    </location>
</feature>
<feature type="glycosylation site" description="N-linked (GlcNAc...) asparagine" evidence="1">
    <location>
        <position position="78"/>
    </location>
</feature>
<feature type="disulfide bond" evidence="2">
    <location>
        <begin position="49"/>
        <end position="94"/>
    </location>
</feature>
<feature type="disulfide bond" evidence="2">
    <location>
        <begin position="244"/>
        <end position="295"/>
    </location>
</feature>
<sequence length="352" mass="38777">MAPKLITVLCLGFCLNQKICPHAGAQDKFSLSAWPSPVVPLGGRVTLSCHSHLRFVIWTIFQTTGTRSHELHTGLSNNITISPVTPEHAGTYRCVGIYKHASKWSAESNSLKIIVTGLFTKPSISAHPSSLVHAGARVSLRCHSELAFDEFILYKEGHIQHSQQLDQGMEAGIHYVEAVFSMGPVTPAHAGAYRCCGCFSHSRYEWSAPSDPLDIVITGKYKKPSLSTQVDPMMRLGEKLTLFCSSEISFDQYHLFRHGVAHGQWLSGGQRHREAFQANFSVGRATPVPGGTYRCYGSFNDSPYKPPVTRCNFTPQETLRVLLCHSQNPPLNLTHLALKDSPATCICSLDSQ</sequence>
<keyword id="KW-1015">Disulfide bond</keyword>
<keyword id="KW-0325">Glycoprotein</keyword>
<keyword id="KW-0393">Immunoglobulin domain</keyword>
<keyword id="KW-1267">Proteomics identification</keyword>
<keyword id="KW-1185">Reference proteome</keyword>
<keyword id="KW-0677">Repeat</keyword>
<keyword id="KW-0964">Secreted</keyword>
<keyword id="KW-0732">Signal</keyword>
<organism>
    <name type="scientific">Homo sapiens</name>
    <name type="common">Human</name>
    <dbReference type="NCBI Taxonomy" id="9606"/>
    <lineage>
        <taxon>Eukaryota</taxon>
        <taxon>Metazoa</taxon>
        <taxon>Chordata</taxon>
        <taxon>Craniata</taxon>
        <taxon>Vertebrata</taxon>
        <taxon>Euteleostomi</taxon>
        <taxon>Mammalia</taxon>
        <taxon>Eutheria</taxon>
        <taxon>Euarchontoglires</taxon>
        <taxon>Primates</taxon>
        <taxon>Haplorrhini</taxon>
        <taxon>Catarrhini</taxon>
        <taxon>Hominidae</taxon>
        <taxon>Homo</taxon>
    </lineage>
</organism>
<proteinExistence type="uncertain"/>
<name>KI3X1_HUMAN</name>
<evidence type="ECO:0000255" key="1"/>
<evidence type="ECO:0000255" key="2">
    <source>
        <dbReference type="PROSITE-ProRule" id="PRU00114"/>
    </source>
</evidence>
<evidence type="ECO:0000269" key="3">
    <source>
    </source>
</evidence>
<evidence type="ECO:0000305" key="4"/>
<dbReference type="EMBL" id="AC009892">
    <property type="status" value="NOT_ANNOTATED_CDS"/>
    <property type="molecule type" value="Genomic_DNA"/>
</dbReference>
<dbReference type="EMBL" id="AC104536">
    <property type="status" value="NOT_ANNOTATED_CDS"/>
    <property type="molecule type" value="Genomic_DNA"/>
</dbReference>
<dbReference type="EMBL" id="AK024467">
    <property type="protein sequence ID" value="BAB15757.1"/>
    <property type="status" value="ALT_SEQ"/>
    <property type="molecule type" value="mRNA"/>
</dbReference>
<dbReference type="EMBL" id="CH471135">
    <property type="protein sequence ID" value="EAW72255.1"/>
    <property type="molecule type" value="Genomic_DNA"/>
</dbReference>
<dbReference type="SMR" id="Q9H7L2"/>
<dbReference type="FunCoup" id="Q9H7L2">
    <property type="interactions" value="26"/>
</dbReference>
<dbReference type="IntAct" id="Q9H7L2">
    <property type="interactions" value="1"/>
</dbReference>
<dbReference type="GlyCosmos" id="Q9H7L2">
    <property type="glycosylation" value="1 site, No reported glycans"/>
</dbReference>
<dbReference type="GlyGen" id="Q9H7L2">
    <property type="glycosylation" value="3 sites, 1 O-linked glycan (1 site)"/>
</dbReference>
<dbReference type="iPTMnet" id="Q9H7L2"/>
<dbReference type="PhosphoSitePlus" id="Q9H7L2"/>
<dbReference type="BioMuta" id="KIR3DX1"/>
<dbReference type="Ensembl" id="ENST00000614511.4">
    <property type="protein sequence ID" value="ENSP00000479122.1"/>
    <property type="gene ID" value="ENSG00000276848.4"/>
</dbReference>
<dbReference type="Ensembl" id="ENST00000614591.1">
    <property type="protein sequence ID" value="ENSP00000484242.1"/>
    <property type="gene ID" value="ENSG00000275918.4"/>
</dbReference>
<dbReference type="Ensembl" id="ENST00000621920.4">
    <property type="protein sequence ID" value="ENSP00000481872.1"/>
    <property type="gene ID" value="ENSG00000276033.4"/>
</dbReference>
<dbReference type="UCSC" id="uc061crn.1">
    <property type="organism name" value="human"/>
</dbReference>
<dbReference type="AGR" id="HGNC:25043"/>
<dbReference type="GeneCards" id="KIR3DX1"/>
<dbReference type="HGNC" id="HGNC:25043">
    <property type="gene designation" value="KIR3DX1"/>
</dbReference>
<dbReference type="neXtProt" id="NX_Q9H7L2"/>
<dbReference type="HOGENOM" id="CLU_021100_2_1_1"/>
<dbReference type="InParanoid" id="Q9H7L2"/>
<dbReference type="PAN-GO" id="Q9H7L2">
    <property type="GO annotations" value="1 GO annotation based on evolutionary models"/>
</dbReference>
<dbReference type="PhylomeDB" id="Q9H7L2"/>
<dbReference type="TreeFam" id="TF352669"/>
<dbReference type="PathwayCommons" id="Q9H7L2"/>
<dbReference type="SignaLink" id="Q9H7L2"/>
<dbReference type="Pharos" id="Q9H7L2">
    <property type="development level" value="Tdark"/>
</dbReference>
<dbReference type="Proteomes" id="UP000005640">
    <property type="component" value="Unplaced"/>
</dbReference>
<dbReference type="RNAct" id="Q9H7L2">
    <property type="molecule type" value="protein"/>
</dbReference>
<dbReference type="GO" id="GO:0005576">
    <property type="term" value="C:extracellular region"/>
    <property type="evidence" value="ECO:0007669"/>
    <property type="project" value="UniProtKB-SubCell"/>
</dbReference>
<dbReference type="GO" id="GO:0005886">
    <property type="term" value="C:plasma membrane"/>
    <property type="evidence" value="ECO:0000318"/>
    <property type="project" value="GO_Central"/>
</dbReference>
<dbReference type="GO" id="GO:0007166">
    <property type="term" value="P:cell surface receptor signaling pathway"/>
    <property type="evidence" value="ECO:0007669"/>
    <property type="project" value="UniProtKB-ARBA"/>
</dbReference>
<dbReference type="GO" id="GO:0002764">
    <property type="term" value="P:immune response-regulating signaling pathway"/>
    <property type="evidence" value="ECO:0000318"/>
    <property type="project" value="GO_Central"/>
</dbReference>
<dbReference type="FunFam" id="2.60.40.10:FF:000049">
    <property type="entry name" value="Leukocyte immunoglobulin-like receptor subfamily B member 1"/>
    <property type="match status" value="3"/>
</dbReference>
<dbReference type="Gene3D" id="2.60.40.10">
    <property type="entry name" value="Immunoglobulins"/>
    <property type="match status" value="3"/>
</dbReference>
<dbReference type="InterPro" id="IPR007110">
    <property type="entry name" value="Ig-like_dom"/>
</dbReference>
<dbReference type="InterPro" id="IPR036179">
    <property type="entry name" value="Ig-like_dom_sf"/>
</dbReference>
<dbReference type="InterPro" id="IPR013783">
    <property type="entry name" value="Ig-like_fold"/>
</dbReference>
<dbReference type="InterPro" id="IPR050412">
    <property type="entry name" value="Ig-like_Receptors_ImmuneReg"/>
</dbReference>
<dbReference type="InterPro" id="IPR003599">
    <property type="entry name" value="Ig_sub"/>
</dbReference>
<dbReference type="InterPro" id="IPR013151">
    <property type="entry name" value="Immunoglobulin_dom"/>
</dbReference>
<dbReference type="PANTHER" id="PTHR11738:SF192">
    <property type="entry name" value="KILLER CELL IMMUNOGLOBULIN-LIKE RECEPTOR-LIKE PROTEIN KIR3DX1-RELATED"/>
    <property type="match status" value="1"/>
</dbReference>
<dbReference type="PANTHER" id="PTHR11738">
    <property type="entry name" value="MHC CLASS I NK CELL RECEPTOR"/>
    <property type="match status" value="1"/>
</dbReference>
<dbReference type="Pfam" id="PF00047">
    <property type="entry name" value="ig"/>
    <property type="match status" value="2"/>
</dbReference>
<dbReference type="SMART" id="SM00409">
    <property type="entry name" value="IG"/>
    <property type="match status" value="3"/>
</dbReference>
<dbReference type="SUPFAM" id="SSF48726">
    <property type="entry name" value="Immunoglobulin"/>
    <property type="match status" value="3"/>
</dbReference>
<dbReference type="PROSITE" id="PS50835">
    <property type="entry name" value="IG_LIKE"/>
    <property type="match status" value="1"/>
</dbReference>